<accession>B3WED7</accession>
<gene>
    <name evidence="1" type="primary">hisZ</name>
    <name type="ordered locus">LCABL_16570</name>
</gene>
<sequence length="382" mass="42621">MSNRHLPIGTRDEFGPRAIRKENLIQTISQQFIQAGFERVKTPLLEYRDVFKPLAVSGEQPYQMLDDAGESVVMRPDLTLPLARLLSTTSIVPPVQWWYVGDIFRVKKSLSGTYNQITQAGIELIGYRSLKAEWACLSEAGKICRTLGLTHLTLELSDAQFVPQILRTLQLNDAAADAFQTAFFAKELSTYQNLIAPLATNPLYPFLQQWPWLFGDSETIFAELKRLLPSNVITDRLAPLQQTVAFLKDQFPELRVTIDLTSRPPQSYYTGIFFHAYVDGGHQYLFSGGRYDKLLASFQQELLPAVGLAFDIDAVTDQLPNAPDQPLTFVYGLPSQWQAAAAMVATTPNARLCLVDTLAEAQAAATKQHANLIDLSPKEAIL</sequence>
<proteinExistence type="inferred from homology"/>
<reference key="1">
    <citation type="submission" date="2008-06" db="EMBL/GenBank/DDBJ databases">
        <title>Lactobacillus casei BL23 complete genome sequence.</title>
        <authorList>
            <person name="Maze A."/>
            <person name="Boel G."/>
            <person name="Bourand A."/>
            <person name="Loux V."/>
            <person name="Gibrat J.F."/>
            <person name="Zuniga M."/>
            <person name="Hartke A."/>
            <person name="Deutscher J."/>
        </authorList>
    </citation>
    <scope>NUCLEOTIDE SEQUENCE [LARGE SCALE GENOMIC DNA]</scope>
    <source>
        <strain>BL23</strain>
    </source>
</reference>
<feature type="chain" id="PRO_1000095460" description="ATP phosphoribosyltransferase regulatory subunit">
    <location>
        <begin position="1"/>
        <end position="382"/>
    </location>
</feature>
<dbReference type="EMBL" id="FM177140">
    <property type="protein sequence ID" value="CAQ66738.1"/>
    <property type="molecule type" value="Genomic_DNA"/>
</dbReference>
<dbReference type="SMR" id="B3WED7"/>
<dbReference type="KEGG" id="lcb:LCABL_16570"/>
<dbReference type="HOGENOM" id="CLU_025113_0_0_9"/>
<dbReference type="UniPathway" id="UPA00031">
    <property type="reaction ID" value="UER00006"/>
</dbReference>
<dbReference type="GO" id="GO:0005737">
    <property type="term" value="C:cytoplasm"/>
    <property type="evidence" value="ECO:0007669"/>
    <property type="project" value="UniProtKB-SubCell"/>
</dbReference>
<dbReference type="GO" id="GO:0140096">
    <property type="term" value="F:catalytic activity, acting on a protein"/>
    <property type="evidence" value="ECO:0007669"/>
    <property type="project" value="UniProtKB-ARBA"/>
</dbReference>
<dbReference type="GO" id="GO:0004821">
    <property type="term" value="F:histidine-tRNA ligase activity"/>
    <property type="evidence" value="ECO:0007669"/>
    <property type="project" value="TreeGrafter"/>
</dbReference>
<dbReference type="GO" id="GO:0016740">
    <property type="term" value="F:transferase activity"/>
    <property type="evidence" value="ECO:0007669"/>
    <property type="project" value="UniProtKB-ARBA"/>
</dbReference>
<dbReference type="GO" id="GO:0006427">
    <property type="term" value="P:histidyl-tRNA aminoacylation"/>
    <property type="evidence" value="ECO:0007669"/>
    <property type="project" value="TreeGrafter"/>
</dbReference>
<dbReference type="GO" id="GO:0000105">
    <property type="term" value="P:L-histidine biosynthetic process"/>
    <property type="evidence" value="ECO:0007669"/>
    <property type="project" value="UniProtKB-UniRule"/>
</dbReference>
<dbReference type="CDD" id="cd00773">
    <property type="entry name" value="HisRS-like_core"/>
    <property type="match status" value="1"/>
</dbReference>
<dbReference type="Gene3D" id="3.30.930.10">
    <property type="entry name" value="Bira Bifunctional Protein, Domain 2"/>
    <property type="match status" value="1"/>
</dbReference>
<dbReference type="HAMAP" id="MF_00125">
    <property type="entry name" value="HisZ"/>
    <property type="match status" value="1"/>
</dbReference>
<dbReference type="InterPro" id="IPR045864">
    <property type="entry name" value="aa-tRNA-synth_II/BPL/LPL"/>
</dbReference>
<dbReference type="InterPro" id="IPR041715">
    <property type="entry name" value="HisRS-like_core"/>
</dbReference>
<dbReference type="InterPro" id="IPR004516">
    <property type="entry name" value="HisRS/HisZ"/>
</dbReference>
<dbReference type="InterPro" id="IPR004517">
    <property type="entry name" value="HisZ"/>
</dbReference>
<dbReference type="PANTHER" id="PTHR43707:SF6">
    <property type="entry name" value="ATP PHOSPHORIBOSYLTRANSFERASE REGULATORY SUBUNIT"/>
    <property type="match status" value="1"/>
</dbReference>
<dbReference type="PANTHER" id="PTHR43707">
    <property type="entry name" value="HISTIDYL-TRNA SYNTHETASE"/>
    <property type="match status" value="1"/>
</dbReference>
<dbReference type="Pfam" id="PF13393">
    <property type="entry name" value="tRNA-synt_His"/>
    <property type="match status" value="1"/>
</dbReference>
<dbReference type="PIRSF" id="PIRSF001549">
    <property type="entry name" value="His-tRNA_synth"/>
    <property type="match status" value="1"/>
</dbReference>
<dbReference type="SUPFAM" id="SSF55681">
    <property type="entry name" value="Class II aaRS and biotin synthetases"/>
    <property type="match status" value="1"/>
</dbReference>
<evidence type="ECO:0000255" key="1">
    <source>
        <dbReference type="HAMAP-Rule" id="MF_00125"/>
    </source>
</evidence>
<keyword id="KW-0028">Amino-acid biosynthesis</keyword>
<keyword id="KW-0963">Cytoplasm</keyword>
<keyword id="KW-0368">Histidine biosynthesis</keyword>
<organism>
    <name type="scientific">Lacticaseibacillus casei (strain BL23)</name>
    <name type="common">Lactobacillus casei</name>
    <dbReference type="NCBI Taxonomy" id="543734"/>
    <lineage>
        <taxon>Bacteria</taxon>
        <taxon>Bacillati</taxon>
        <taxon>Bacillota</taxon>
        <taxon>Bacilli</taxon>
        <taxon>Lactobacillales</taxon>
        <taxon>Lactobacillaceae</taxon>
        <taxon>Lacticaseibacillus</taxon>
    </lineage>
</organism>
<protein>
    <recommendedName>
        <fullName evidence="1">ATP phosphoribosyltransferase regulatory subunit</fullName>
    </recommendedName>
</protein>
<comment type="function">
    <text evidence="1">Required for the first step of histidine biosynthesis. May allow the feedback regulation of ATP phosphoribosyltransferase activity by histidine.</text>
</comment>
<comment type="pathway">
    <text evidence="1">Amino-acid biosynthesis; L-histidine biosynthesis; L-histidine from 5-phospho-alpha-D-ribose 1-diphosphate: step 1/9.</text>
</comment>
<comment type="subunit">
    <text evidence="1">Heteromultimer composed of HisG and HisZ subunits.</text>
</comment>
<comment type="subcellular location">
    <subcellularLocation>
        <location evidence="1">Cytoplasm</location>
    </subcellularLocation>
</comment>
<comment type="miscellaneous">
    <text>This function is generally fulfilled by the C-terminal part of HisG, which is missing in some bacteria such as this one.</text>
</comment>
<comment type="similarity">
    <text evidence="1">Belongs to the class-II aminoacyl-tRNA synthetase family. HisZ subfamily.</text>
</comment>
<name>HISZ_LACCB</name>